<comment type="alternative products">
    <event type="alternative splicing"/>
    <isoform>
        <id>Q6ZRS4-1</id>
        <name>1</name>
        <sequence type="displayed"/>
    </isoform>
    <isoform>
        <id>Q6ZRS4-2</id>
        <name>2</name>
        <sequence type="described" ref="VSP_039587"/>
    </isoform>
    <isoform>
        <id>Q6ZRS4-3</id>
        <name>3</name>
        <sequence type="described" ref="VSP_039586"/>
    </isoform>
    <isoform>
        <id>Q6ZRS4-4</id>
        <name>4</name>
        <sequence type="described" ref="VSP_045000 VSP_045001"/>
    </isoform>
</comment>
<comment type="sequence caution" evidence="7">
    <conflict type="erroneous initiation">
        <sequence resource="EMBL-CDS" id="BAG65223"/>
    </conflict>
    <text>Extended N-terminus.</text>
</comment>
<organism>
    <name type="scientific">Homo sapiens</name>
    <name type="common">Human</name>
    <dbReference type="NCBI Taxonomy" id="9606"/>
    <lineage>
        <taxon>Eukaryota</taxon>
        <taxon>Metazoa</taxon>
        <taxon>Chordata</taxon>
        <taxon>Craniata</taxon>
        <taxon>Vertebrata</taxon>
        <taxon>Euteleostomi</taxon>
        <taxon>Mammalia</taxon>
        <taxon>Eutheria</taxon>
        <taxon>Euarchontoglires</taxon>
        <taxon>Primates</taxon>
        <taxon>Haplorrhini</taxon>
        <taxon>Catarrhini</taxon>
        <taxon>Hominidae</taxon>
        <taxon>Homo</taxon>
    </lineage>
</organism>
<gene>
    <name evidence="8" type="primary">ITPRID1</name>
    <name evidence="8" type="synonym">CCDC129</name>
</gene>
<reference key="1">
    <citation type="journal article" date="2004" name="Nat. Genet.">
        <title>Complete sequencing and characterization of 21,243 full-length human cDNAs.</title>
        <authorList>
            <person name="Ota T."/>
            <person name="Suzuki Y."/>
            <person name="Nishikawa T."/>
            <person name="Otsuki T."/>
            <person name="Sugiyama T."/>
            <person name="Irie R."/>
            <person name="Wakamatsu A."/>
            <person name="Hayashi K."/>
            <person name="Sato H."/>
            <person name="Nagai K."/>
            <person name="Kimura K."/>
            <person name="Makita H."/>
            <person name="Sekine M."/>
            <person name="Obayashi M."/>
            <person name="Nishi T."/>
            <person name="Shibahara T."/>
            <person name="Tanaka T."/>
            <person name="Ishii S."/>
            <person name="Yamamoto J."/>
            <person name="Saito K."/>
            <person name="Kawai Y."/>
            <person name="Isono Y."/>
            <person name="Nakamura Y."/>
            <person name="Nagahari K."/>
            <person name="Murakami K."/>
            <person name="Yasuda T."/>
            <person name="Iwayanagi T."/>
            <person name="Wagatsuma M."/>
            <person name="Shiratori A."/>
            <person name="Sudo H."/>
            <person name="Hosoiri T."/>
            <person name="Kaku Y."/>
            <person name="Kodaira H."/>
            <person name="Kondo H."/>
            <person name="Sugawara M."/>
            <person name="Takahashi M."/>
            <person name="Kanda K."/>
            <person name="Yokoi T."/>
            <person name="Furuya T."/>
            <person name="Kikkawa E."/>
            <person name="Omura Y."/>
            <person name="Abe K."/>
            <person name="Kamihara K."/>
            <person name="Katsuta N."/>
            <person name="Sato K."/>
            <person name="Tanikawa M."/>
            <person name="Yamazaki M."/>
            <person name="Ninomiya K."/>
            <person name="Ishibashi T."/>
            <person name="Yamashita H."/>
            <person name="Murakawa K."/>
            <person name="Fujimori K."/>
            <person name="Tanai H."/>
            <person name="Kimata M."/>
            <person name="Watanabe M."/>
            <person name="Hiraoka S."/>
            <person name="Chiba Y."/>
            <person name="Ishida S."/>
            <person name="Ono Y."/>
            <person name="Takiguchi S."/>
            <person name="Watanabe S."/>
            <person name="Yosida M."/>
            <person name="Hotuta T."/>
            <person name="Kusano J."/>
            <person name="Kanehori K."/>
            <person name="Takahashi-Fujii A."/>
            <person name="Hara H."/>
            <person name="Tanase T.-O."/>
            <person name="Nomura Y."/>
            <person name="Togiya S."/>
            <person name="Komai F."/>
            <person name="Hara R."/>
            <person name="Takeuchi K."/>
            <person name="Arita M."/>
            <person name="Imose N."/>
            <person name="Musashino K."/>
            <person name="Yuuki H."/>
            <person name="Oshima A."/>
            <person name="Sasaki N."/>
            <person name="Aotsuka S."/>
            <person name="Yoshikawa Y."/>
            <person name="Matsunawa H."/>
            <person name="Ichihara T."/>
            <person name="Shiohata N."/>
            <person name="Sano S."/>
            <person name="Moriya S."/>
            <person name="Momiyama H."/>
            <person name="Satoh N."/>
            <person name="Takami S."/>
            <person name="Terashima Y."/>
            <person name="Suzuki O."/>
            <person name="Nakagawa S."/>
            <person name="Senoh A."/>
            <person name="Mizoguchi H."/>
            <person name="Goto Y."/>
            <person name="Shimizu F."/>
            <person name="Wakebe H."/>
            <person name="Hishigaki H."/>
            <person name="Watanabe T."/>
            <person name="Sugiyama A."/>
            <person name="Takemoto M."/>
            <person name="Kawakami B."/>
            <person name="Yamazaki M."/>
            <person name="Watanabe K."/>
            <person name="Kumagai A."/>
            <person name="Itakura S."/>
            <person name="Fukuzumi Y."/>
            <person name="Fujimori Y."/>
            <person name="Komiyama M."/>
            <person name="Tashiro H."/>
            <person name="Tanigami A."/>
            <person name="Fujiwara T."/>
            <person name="Ono T."/>
            <person name="Yamada K."/>
            <person name="Fujii Y."/>
            <person name="Ozaki K."/>
            <person name="Hirao M."/>
            <person name="Ohmori Y."/>
            <person name="Kawabata A."/>
            <person name="Hikiji T."/>
            <person name="Kobatake N."/>
            <person name="Inagaki H."/>
            <person name="Ikema Y."/>
            <person name="Okamoto S."/>
            <person name="Okitani R."/>
            <person name="Kawakami T."/>
            <person name="Noguchi S."/>
            <person name="Itoh T."/>
            <person name="Shigeta K."/>
            <person name="Senba T."/>
            <person name="Matsumura K."/>
            <person name="Nakajima Y."/>
            <person name="Mizuno T."/>
            <person name="Morinaga M."/>
            <person name="Sasaki M."/>
            <person name="Togashi T."/>
            <person name="Oyama M."/>
            <person name="Hata H."/>
            <person name="Watanabe M."/>
            <person name="Komatsu T."/>
            <person name="Mizushima-Sugano J."/>
            <person name="Satoh T."/>
            <person name="Shirai Y."/>
            <person name="Takahashi Y."/>
            <person name="Nakagawa K."/>
            <person name="Okumura K."/>
            <person name="Nagase T."/>
            <person name="Nomura N."/>
            <person name="Kikuchi H."/>
            <person name="Masuho Y."/>
            <person name="Yamashita R."/>
            <person name="Nakai K."/>
            <person name="Yada T."/>
            <person name="Nakamura Y."/>
            <person name="Ohara O."/>
            <person name="Isogai T."/>
            <person name="Sugano S."/>
        </authorList>
    </citation>
    <scope>NUCLEOTIDE SEQUENCE [LARGE SCALE MRNA] (ISOFORMS 1; 2; 3 AND 4)</scope>
    <scope>VARIANTS ASP-32; ARG-377; VAL-490 AND TYR-809</scope>
    <source>
        <tissue>Fetal brain</tissue>
        <tissue>Testis</tissue>
        <tissue>Trachea</tissue>
    </source>
</reference>
<reference key="2">
    <citation type="journal article" date="2003" name="Nature">
        <title>The DNA sequence of human chromosome 7.</title>
        <authorList>
            <person name="Hillier L.W."/>
            <person name="Fulton R.S."/>
            <person name="Fulton L.A."/>
            <person name="Graves T.A."/>
            <person name="Pepin K.H."/>
            <person name="Wagner-McPherson C."/>
            <person name="Layman D."/>
            <person name="Maas J."/>
            <person name="Jaeger S."/>
            <person name="Walker R."/>
            <person name="Wylie K."/>
            <person name="Sekhon M."/>
            <person name="Becker M.C."/>
            <person name="O'Laughlin M.D."/>
            <person name="Schaller M.E."/>
            <person name="Fewell G.A."/>
            <person name="Delehaunty K.D."/>
            <person name="Miner T.L."/>
            <person name="Nash W.E."/>
            <person name="Cordes M."/>
            <person name="Du H."/>
            <person name="Sun H."/>
            <person name="Edwards J."/>
            <person name="Bradshaw-Cordum H."/>
            <person name="Ali J."/>
            <person name="Andrews S."/>
            <person name="Isak A."/>
            <person name="Vanbrunt A."/>
            <person name="Nguyen C."/>
            <person name="Du F."/>
            <person name="Lamar B."/>
            <person name="Courtney L."/>
            <person name="Kalicki J."/>
            <person name="Ozersky P."/>
            <person name="Bielicki L."/>
            <person name="Scott K."/>
            <person name="Holmes A."/>
            <person name="Harkins R."/>
            <person name="Harris A."/>
            <person name="Strong C.M."/>
            <person name="Hou S."/>
            <person name="Tomlinson C."/>
            <person name="Dauphin-Kohlberg S."/>
            <person name="Kozlowicz-Reilly A."/>
            <person name="Leonard S."/>
            <person name="Rohlfing T."/>
            <person name="Rock S.M."/>
            <person name="Tin-Wollam A.-M."/>
            <person name="Abbott A."/>
            <person name="Minx P."/>
            <person name="Maupin R."/>
            <person name="Strowmatt C."/>
            <person name="Latreille P."/>
            <person name="Miller N."/>
            <person name="Johnson D."/>
            <person name="Murray J."/>
            <person name="Woessner J.P."/>
            <person name="Wendl M.C."/>
            <person name="Yang S.-P."/>
            <person name="Schultz B.R."/>
            <person name="Wallis J.W."/>
            <person name="Spieth J."/>
            <person name="Bieri T.A."/>
            <person name="Nelson J.O."/>
            <person name="Berkowicz N."/>
            <person name="Wohldmann P.E."/>
            <person name="Cook L.L."/>
            <person name="Hickenbotham M.T."/>
            <person name="Eldred J."/>
            <person name="Williams D."/>
            <person name="Bedell J.A."/>
            <person name="Mardis E.R."/>
            <person name="Clifton S.W."/>
            <person name="Chissoe S.L."/>
            <person name="Marra M.A."/>
            <person name="Raymond C."/>
            <person name="Haugen E."/>
            <person name="Gillett W."/>
            <person name="Zhou Y."/>
            <person name="James R."/>
            <person name="Phelps K."/>
            <person name="Iadanoto S."/>
            <person name="Bubb K."/>
            <person name="Simms E."/>
            <person name="Levy R."/>
            <person name="Clendenning J."/>
            <person name="Kaul R."/>
            <person name="Kent W.J."/>
            <person name="Furey T.S."/>
            <person name="Baertsch R.A."/>
            <person name="Brent M.R."/>
            <person name="Keibler E."/>
            <person name="Flicek P."/>
            <person name="Bork P."/>
            <person name="Suyama M."/>
            <person name="Bailey J.A."/>
            <person name="Portnoy M.E."/>
            <person name="Torrents D."/>
            <person name="Chinwalla A.T."/>
            <person name="Gish W.R."/>
            <person name="Eddy S.R."/>
            <person name="McPherson J.D."/>
            <person name="Olson M.V."/>
            <person name="Eichler E.E."/>
            <person name="Green E.D."/>
            <person name="Waterston R.H."/>
            <person name="Wilson R.K."/>
        </authorList>
    </citation>
    <scope>NUCLEOTIDE SEQUENCE [LARGE SCALE GENOMIC DNA]</scope>
</reference>
<reference key="3">
    <citation type="journal article" date="2004" name="Genome Res.">
        <title>The status, quality, and expansion of the NIH full-length cDNA project: the Mammalian Gene Collection (MGC).</title>
        <authorList>
            <consortium name="The MGC Project Team"/>
        </authorList>
    </citation>
    <scope>NUCLEOTIDE SEQUENCE [LARGE SCALE MRNA] (ISOFORM 1)</scope>
    <scope>VARIANTS ASP-32; ARG-377; VAL-490 AND TYR-809</scope>
</reference>
<reference key="4">
    <citation type="journal article" date="2006" name="Science">
        <title>The consensus coding sequences of human breast and colorectal cancers.</title>
        <authorList>
            <person name="Sjoeblom T."/>
            <person name="Jones S."/>
            <person name="Wood L.D."/>
            <person name="Parsons D.W."/>
            <person name="Lin J."/>
            <person name="Barber T.D."/>
            <person name="Mandelker D."/>
            <person name="Leary R.J."/>
            <person name="Ptak J."/>
            <person name="Silliman N."/>
            <person name="Szabo S."/>
            <person name="Buckhaults P."/>
            <person name="Farrell C."/>
            <person name="Meeh P."/>
            <person name="Markowitz S.D."/>
            <person name="Willis J."/>
            <person name="Dawson D."/>
            <person name="Willson J.K.V."/>
            <person name="Gazdar A.F."/>
            <person name="Hartigan J."/>
            <person name="Wu L."/>
            <person name="Liu C."/>
            <person name="Parmigiani G."/>
            <person name="Park B.H."/>
            <person name="Bachman K.E."/>
            <person name="Papadopoulos N."/>
            <person name="Vogelstein B."/>
            <person name="Kinzler K.W."/>
            <person name="Velculescu V.E."/>
        </authorList>
    </citation>
    <scope>VARIANT [LARGE SCALE ANALYSIS] VAL-105</scope>
</reference>
<feature type="chain" id="PRO_0000270963" description="Protein ITPRID1">
    <location>
        <begin position="1"/>
        <end position="1044"/>
    </location>
</feature>
<feature type="region of interest" description="Disordered" evidence="2">
    <location>
        <begin position="1"/>
        <end position="20"/>
    </location>
</feature>
<feature type="region of interest" description="Disordered" evidence="2">
    <location>
        <begin position="230"/>
        <end position="251"/>
    </location>
</feature>
<feature type="region of interest" description="Disordered" evidence="2">
    <location>
        <begin position="388"/>
        <end position="489"/>
    </location>
</feature>
<feature type="region of interest" description="Disordered" evidence="2">
    <location>
        <begin position="583"/>
        <end position="607"/>
    </location>
</feature>
<feature type="coiled-coil region" evidence="1">
    <location>
        <begin position="896"/>
        <end position="937"/>
    </location>
</feature>
<feature type="compositionally biased region" description="Polar residues" evidence="2">
    <location>
        <begin position="1"/>
        <end position="14"/>
    </location>
</feature>
<feature type="compositionally biased region" description="Acidic residues" evidence="2">
    <location>
        <begin position="388"/>
        <end position="398"/>
    </location>
</feature>
<feature type="compositionally biased region" description="Polar residues" evidence="2">
    <location>
        <begin position="460"/>
        <end position="469"/>
    </location>
</feature>
<feature type="compositionally biased region" description="Polar residues" evidence="2">
    <location>
        <begin position="480"/>
        <end position="489"/>
    </location>
</feature>
<feature type="splice variant" id="VSP_039586" description="In isoform 3." evidence="6">
    <location>
        <begin position="1"/>
        <end position="92"/>
    </location>
</feature>
<feature type="splice variant" id="VSP_045000" description="In isoform 4." evidence="6">
    <original>M</original>
    <variation>MPTTASCKTISLLKLLYSVSLQNYSPM</variation>
    <location>
        <position position="1"/>
    </location>
</feature>
<feature type="splice variant" id="VSP_039587" description="In isoform 2." evidence="6">
    <location>
        <begin position="244"/>
        <end position="391"/>
    </location>
</feature>
<feature type="splice variant" id="VSP_045001" description="In isoform 4." evidence="6">
    <original>GTQLAAFTPPTLENSTRMSPSSSAWAKLGPTPLSNCPVGEKDADVFL</original>
    <variation>ELLSAELDPFFFSSKANNSAKDEKIKSKDFLKTQDSGLL</variation>
    <location>
        <begin position="998"/>
        <end position="1044"/>
    </location>
</feature>
<feature type="sequence variant" id="VAR_033660" description="In dbSNP:rs7811042." evidence="3 4">
    <original>A</original>
    <variation>D</variation>
    <location>
        <position position="32"/>
    </location>
</feature>
<feature type="sequence variant" id="VAR_035496" description="In a colorectal cancer sample; somatic mutation." evidence="5">
    <original>L</original>
    <variation>V</variation>
    <location>
        <position position="105"/>
    </location>
</feature>
<feature type="sequence variant" id="VAR_063505" description="In dbSNP:rs10252720." evidence="3 4">
    <original>H</original>
    <variation>R</variation>
    <location>
        <position position="377"/>
    </location>
</feature>
<feature type="sequence variant" id="VAR_033661" description="In dbSNP:rs4141001." evidence="3 4">
    <original>A</original>
    <variation>V</variation>
    <location>
        <position position="490"/>
    </location>
</feature>
<feature type="sequence variant" id="VAR_033662" description="In dbSNP:rs10247620." evidence="3 4">
    <original>C</original>
    <variation>Y</variation>
    <location>
        <position position="809"/>
    </location>
</feature>
<feature type="sequence variant" id="VAR_033663" description="In dbSNP:rs7799540.">
    <original>H</original>
    <variation>Y</variation>
    <location>
        <position position="887"/>
    </location>
</feature>
<feature type="sequence conflict" description="In Ref. 1; BAC87235." evidence="7" ref="1">
    <original>P</original>
    <variation>S</variation>
    <location>
        <position position="802"/>
    </location>
</feature>
<dbReference type="EMBL" id="AK095663">
    <property type="protein sequence ID" value="BAG53101.1"/>
    <property type="molecule type" value="mRNA"/>
</dbReference>
<dbReference type="EMBL" id="AK128026">
    <property type="protein sequence ID" value="BAC87235.1"/>
    <property type="molecule type" value="mRNA"/>
</dbReference>
<dbReference type="EMBL" id="AK295011">
    <property type="protein sequence ID" value="BAG58071.1"/>
    <property type="molecule type" value="mRNA"/>
</dbReference>
<dbReference type="EMBL" id="AK304387">
    <property type="protein sequence ID" value="BAG65223.1"/>
    <property type="status" value="ALT_INIT"/>
    <property type="molecule type" value="mRNA"/>
</dbReference>
<dbReference type="EMBL" id="AC005090">
    <property type="status" value="NOT_ANNOTATED_CDS"/>
    <property type="molecule type" value="Genomic_DNA"/>
</dbReference>
<dbReference type="EMBL" id="AC006044">
    <property type="status" value="NOT_ANNOTATED_CDS"/>
    <property type="molecule type" value="Genomic_DNA"/>
</dbReference>
<dbReference type="EMBL" id="BC132719">
    <property type="protein sequence ID" value="AAI32720.1"/>
    <property type="molecule type" value="mRNA"/>
</dbReference>
<dbReference type="CCDS" id="CCDS5435.2">
    <molecule id="Q6ZRS4-1"/>
</dbReference>
<dbReference type="RefSeq" id="NP_001244896.2">
    <molecule id="Q6ZRS4-1"/>
    <property type="nucleotide sequence ID" value="NM_001257967.3"/>
</dbReference>
<dbReference type="RefSeq" id="NP_001244897.1">
    <property type="nucleotide sequence ID" value="NM_001257968.2"/>
</dbReference>
<dbReference type="RefSeq" id="NP_919276.2">
    <molecule id="Q6ZRS4-1"/>
    <property type="nucleotide sequence ID" value="NM_194300.5"/>
</dbReference>
<dbReference type="RefSeq" id="XP_011513515.1">
    <molecule id="Q6ZRS4-1"/>
    <property type="nucleotide sequence ID" value="XM_011515213.3"/>
</dbReference>
<dbReference type="RefSeq" id="XP_016867360.1">
    <molecule id="Q6ZRS4-1"/>
    <property type="nucleotide sequence ID" value="XM_017011871.3"/>
</dbReference>
<dbReference type="RefSeq" id="XP_024302460.1">
    <molecule id="Q6ZRS4-3"/>
    <property type="nucleotide sequence ID" value="XM_024446692.2"/>
</dbReference>
<dbReference type="SMR" id="Q6ZRS4"/>
<dbReference type="BioGRID" id="128824">
    <property type="interactions" value="1"/>
</dbReference>
<dbReference type="FunCoup" id="Q6ZRS4">
    <property type="interactions" value="2"/>
</dbReference>
<dbReference type="STRING" id="9606.ENSP00000395835"/>
<dbReference type="GlyGen" id="Q6ZRS4">
    <property type="glycosylation" value="2 sites, 1 O-linked glycan (1 site)"/>
</dbReference>
<dbReference type="iPTMnet" id="Q6ZRS4"/>
<dbReference type="PhosphoSitePlus" id="Q6ZRS4"/>
<dbReference type="BioMuta" id="CCDC129"/>
<dbReference type="DMDM" id="302393683"/>
<dbReference type="jPOST" id="Q6ZRS4"/>
<dbReference type="MassIVE" id="Q6ZRS4"/>
<dbReference type="PaxDb" id="9606-ENSP00000395835"/>
<dbReference type="PeptideAtlas" id="Q6ZRS4"/>
<dbReference type="ProteomicsDB" id="26385"/>
<dbReference type="ProteomicsDB" id="68165">
    <molecule id="Q6ZRS4-1"/>
</dbReference>
<dbReference type="ProteomicsDB" id="68166">
    <molecule id="Q6ZRS4-2"/>
</dbReference>
<dbReference type="ProteomicsDB" id="68167">
    <molecule id="Q6ZRS4-3"/>
</dbReference>
<dbReference type="Antibodypedia" id="12709">
    <property type="antibodies" value="47 antibodies from 12 providers"/>
</dbReference>
<dbReference type="DNASU" id="223075"/>
<dbReference type="Ensembl" id="ENST00000319386.7">
    <molecule id="Q6ZRS4-2"/>
    <property type="protein sequence ID" value="ENSP00000313062.3"/>
    <property type="gene ID" value="ENSG00000180347.15"/>
</dbReference>
<dbReference type="Ensembl" id="ENST00000407970.7">
    <molecule id="Q6ZRS4-1"/>
    <property type="protein sequence ID" value="ENSP00000384416.3"/>
    <property type="gene ID" value="ENSG00000180347.15"/>
</dbReference>
<dbReference type="Ensembl" id="ENST00000409210.1">
    <molecule id="Q6ZRS4-3"/>
    <property type="protein sequence ID" value="ENSP00000387214.1"/>
    <property type="gene ID" value="ENSG00000180347.15"/>
</dbReference>
<dbReference type="Ensembl" id="ENST00000615280.5">
    <molecule id="Q6ZRS4-1"/>
    <property type="protein sequence ID" value="ENSP00000478518.2"/>
    <property type="gene ID" value="ENSG00000180347.15"/>
</dbReference>
<dbReference type="GeneID" id="223075"/>
<dbReference type="KEGG" id="hsa:223075"/>
<dbReference type="MANE-Select" id="ENST00000615280.5">
    <property type="protein sequence ID" value="ENSP00000478518.2"/>
    <property type="RefSeq nucleotide sequence ID" value="NM_001257967.3"/>
    <property type="RefSeq protein sequence ID" value="NP_001244896.2"/>
</dbReference>
<dbReference type="UCSC" id="uc003tci.2">
    <molecule id="Q6ZRS4-1"/>
    <property type="organism name" value="human"/>
</dbReference>
<dbReference type="AGR" id="HGNC:27363"/>
<dbReference type="CTD" id="223075"/>
<dbReference type="DisGeNET" id="223075"/>
<dbReference type="GeneCards" id="ITPRID1"/>
<dbReference type="HGNC" id="HGNC:27363">
    <property type="gene designation" value="ITPRID1"/>
</dbReference>
<dbReference type="HPA" id="ENSG00000180347">
    <property type="expression patterns" value="Tissue enhanced (brain, salivary gland, skin)"/>
</dbReference>
<dbReference type="neXtProt" id="NX_Q6ZRS4"/>
<dbReference type="OpenTargets" id="ENSG00000180347"/>
<dbReference type="PharmGKB" id="PA162381298"/>
<dbReference type="VEuPathDB" id="HostDB:ENSG00000180347"/>
<dbReference type="eggNOG" id="ENOG502QU3K">
    <property type="taxonomic scope" value="Eukaryota"/>
</dbReference>
<dbReference type="GeneTree" id="ENSGT00940000161762"/>
<dbReference type="HOGENOM" id="CLU_313444_0_0_1"/>
<dbReference type="InParanoid" id="Q6ZRS4"/>
<dbReference type="OMA" id="PDICTRI"/>
<dbReference type="OrthoDB" id="9836301at2759"/>
<dbReference type="PAN-GO" id="Q6ZRS4">
    <property type="GO annotations" value="0 GO annotations based on evolutionary models"/>
</dbReference>
<dbReference type="PhylomeDB" id="Q6ZRS4"/>
<dbReference type="TreeFam" id="TF331566"/>
<dbReference type="PathwayCommons" id="Q6ZRS4"/>
<dbReference type="BioGRID-ORCS" id="223075">
    <property type="hits" value="14 hits in 1132 CRISPR screens"/>
</dbReference>
<dbReference type="ChiTaRS" id="CCDC129">
    <property type="organism name" value="human"/>
</dbReference>
<dbReference type="GenomeRNAi" id="223075"/>
<dbReference type="Pharos" id="Q6ZRS4">
    <property type="development level" value="Tdark"/>
</dbReference>
<dbReference type="PRO" id="PR:Q6ZRS4"/>
<dbReference type="Proteomes" id="UP000005640">
    <property type="component" value="Chromosome 7"/>
</dbReference>
<dbReference type="RNAct" id="Q6ZRS4">
    <property type="molecule type" value="protein"/>
</dbReference>
<dbReference type="Bgee" id="ENSG00000180347">
    <property type="expression patterns" value="Expressed in male germ line stem cell (sensu Vertebrata) in testis and 74 other cell types or tissues"/>
</dbReference>
<dbReference type="ExpressionAtlas" id="Q6ZRS4">
    <property type="expression patterns" value="baseline and differential"/>
</dbReference>
<dbReference type="GO" id="GO:0005102">
    <property type="term" value="F:signaling receptor binding"/>
    <property type="evidence" value="ECO:0007669"/>
    <property type="project" value="InterPro"/>
</dbReference>
<dbReference type="InterPro" id="IPR029325">
    <property type="entry name" value="ITPR-bd"/>
</dbReference>
<dbReference type="InterPro" id="IPR029326">
    <property type="entry name" value="SSFA2_C"/>
</dbReference>
<dbReference type="InterPro" id="IPR043444">
    <property type="entry name" value="TESPA1-like"/>
</dbReference>
<dbReference type="PANTHER" id="PTHR17469:SF14">
    <property type="entry name" value="PROTEIN ITPRID1"/>
    <property type="match status" value="1"/>
</dbReference>
<dbReference type="PANTHER" id="PTHR17469">
    <property type="entry name" value="SPERM SPECIFIC ANTIGEN 2-RELATED"/>
    <property type="match status" value="1"/>
</dbReference>
<dbReference type="Pfam" id="PF14722">
    <property type="entry name" value="KRAP_IP3R_bind"/>
    <property type="match status" value="1"/>
</dbReference>
<dbReference type="Pfam" id="PF14723">
    <property type="entry name" value="SSFA2_C"/>
    <property type="match status" value="1"/>
</dbReference>
<dbReference type="SMART" id="SM01257">
    <property type="entry name" value="KRAP_IP3R_bind"/>
    <property type="match status" value="1"/>
</dbReference>
<sequence>MMAQKSQGSDNLQEGQEKSKREILKCTKSAWAPLDEWLPPDPEEESQSLTIPMLEDSKQESIQQWLDSGFFVSANENFQQVIDRTVSLYEQGMVQMTVKDYMRSLHQFSETPILSRGTSFNSCYSTASVPQSIPEWLEFWEIDPVEILLDLGFGADEPDICMQIPARFLGCGSAARGINIRVFLEAQKQRMDIENPNLYGRFRQLEILDHVTNAFSSLLSDVSILPNRAEEKAGGESVQRTSVSAAKEHRRRMGKLLRRASKQNIRRDCNPEVSESFKVKDEVFVPFTKPWDCGAELAATSINHKQNHLSLSVEHQSLQACDDLLPYPPHGLLSKQWPCSSMPAKQAPPSCVSEGSVKGRTQKENLFQTNKLKSLSHLAGKGPDSFEMEEVQSFEEETGNPLDMTSGTVGARVDRANSCQSDSSGFLEEPLEPLPLQMPSLPNSQSPAENGGRKPRDQSHSLVSSQDCQLESDGPDSKSRASMSFSSQEANALEQRASVSVMEEEFLLEAMEGPPELYIPDMACAKTTTRGECPRKDSHLWQLLPMPHAEYEVTRPTATSKYDHPLGFMVTHVTEMQDSFVRPEGAGKVQSHHNESQRSPGNDHTQDKFLHVDSEAPREEESSGFCPHTNHSLLVPESSSQCIPKHSEITPYATDLAQTSEKLIPHLHKLPGDPAQVKSRSGTLGQILPGTEAEMENLPLNTGSSRSVMTQMSSSLVSAAQRAVALGTGPRGTSLECTVCDPVTATETRLGTKARQLNDASIQTSALSNKTLTHGPQPLTKSVSLDSGFSSICPMGTCHAIPAHCCICCHHHPHCHGERQSPGPEPSVCRHCLCSLTGHQEAQFMTTLKALQDTTVRELCSCTVHEMEAMKTICQSFREYLEEIEQHLMGQQALFSRDMSEEEREEAEQLQTLREALRQQVAELEFQLGDRAQQIREGILLQLEVLTAEPPEHYSNLHQYNWIEESNGQTSCSKIHPGMAPRTVFPPDDGQEAPCSGGTQLAAFTPPTLENSTRMSPSSSAWAKLGPTPLSNCPVGEKDADVFL</sequence>
<keyword id="KW-0025">Alternative splicing</keyword>
<keyword id="KW-0175">Coiled coil</keyword>
<keyword id="KW-1267">Proteomics identification</keyword>
<keyword id="KW-1185">Reference proteome</keyword>
<protein>
    <recommendedName>
        <fullName evidence="7">Protein ITPRID1</fullName>
    </recommendedName>
    <alternativeName>
        <fullName>Coiled-coil domain-containing protein 129</fullName>
    </alternativeName>
    <alternativeName>
        <fullName evidence="7">ITPR-interacting domain-containing protein 1</fullName>
    </alternativeName>
</protein>
<accession>Q6ZRS4</accession>
<accession>A2RU17</accession>
<accession>B3KTI9</accession>
<accession>B4DHB0</accession>
<accession>B4E2R1</accession>
<accession>F5H3V5</accession>
<name>ITPI1_HUMAN</name>
<evidence type="ECO:0000255" key="1"/>
<evidence type="ECO:0000256" key="2">
    <source>
        <dbReference type="SAM" id="MobiDB-lite"/>
    </source>
</evidence>
<evidence type="ECO:0000269" key="3">
    <source>
    </source>
</evidence>
<evidence type="ECO:0000269" key="4">
    <source>
    </source>
</evidence>
<evidence type="ECO:0000269" key="5">
    <source>
    </source>
</evidence>
<evidence type="ECO:0000303" key="6">
    <source>
    </source>
</evidence>
<evidence type="ECO:0000305" key="7"/>
<evidence type="ECO:0000312" key="8">
    <source>
        <dbReference type="HGNC" id="HGNC:27363"/>
    </source>
</evidence>
<proteinExistence type="evidence at protein level"/>